<keyword id="KW-0067">ATP-binding</keyword>
<keyword id="KW-0436">Ligase</keyword>
<keyword id="KW-0496">Mitochondrion</keyword>
<keyword id="KW-0547">Nucleotide-binding</keyword>
<keyword id="KW-1185">Reference proteome</keyword>
<keyword id="KW-0809">Transit peptide</keyword>
<name>MCCB_DROME</name>
<accession>Q9V9A7</accession>
<accession>O18364</accession>
<accession>Q8SXT5</accession>
<comment type="function">
    <text evidence="1">Carboxyltransferase subunit of the 3-methylcrotonyl-CoA carboxylase, an enzyme that catalyzes the conversion of 3-methylcrotonyl-CoA to 3-methylglutaconyl-CoA, a critical step for leucine and isovaleric acid catabolism (By similarity). Vital for adult survival.</text>
</comment>
<comment type="catalytic activity">
    <reaction>
        <text>3-methylbut-2-enoyl-CoA + hydrogencarbonate + ATP = 3-methyl-(2E)-glutaconyl-CoA + ADP + phosphate + H(+)</text>
        <dbReference type="Rhea" id="RHEA:13589"/>
        <dbReference type="ChEBI" id="CHEBI:15378"/>
        <dbReference type="ChEBI" id="CHEBI:17544"/>
        <dbReference type="ChEBI" id="CHEBI:30616"/>
        <dbReference type="ChEBI" id="CHEBI:43474"/>
        <dbReference type="ChEBI" id="CHEBI:57344"/>
        <dbReference type="ChEBI" id="CHEBI:57346"/>
        <dbReference type="ChEBI" id="CHEBI:456216"/>
        <dbReference type="EC" id="6.4.1.4"/>
    </reaction>
</comment>
<comment type="pathway">
    <text>Amino-acid degradation; L-leucine degradation; (S)-3-hydroxy-3-methylglutaryl-CoA from 3-isovaleryl-CoA: step 2/3.</text>
</comment>
<comment type="subcellular location">
    <subcellularLocation>
        <location evidence="1">Mitochondrion matrix</location>
    </subcellularLocation>
</comment>
<comment type="tissue specificity">
    <text evidence="6">Expressed in third instar larval ring gland (lateral and medial secretory cells and corpus cardiacum cells) and CNS.</text>
</comment>
<comment type="similarity">
    <text evidence="7">Belongs to the AccD/PCCB family.</text>
</comment>
<proteinExistence type="evidence at transcript level"/>
<organism evidence="8">
    <name type="scientific">Drosophila melanogaster</name>
    <name type="common">Fruit fly</name>
    <dbReference type="NCBI Taxonomy" id="7227"/>
    <lineage>
        <taxon>Eukaryota</taxon>
        <taxon>Metazoa</taxon>
        <taxon>Ecdysozoa</taxon>
        <taxon>Arthropoda</taxon>
        <taxon>Hexapoda</taxon>
        <taxon>Insecta</taxon>
        <taxon>Pterygota</taxon>
        <taxon>Neoptera</taxon>
        <taxon>Endopterygota</taxon>
        <taxon>Diptera</taxon>
        <taxon>Brachycera</taxon>
        <taxon>Muscomorpha</taxon>
        <taxon>Ephydroidea</taxon>
        <taxon>Drosophilidae</taxon>
        <taxon>Drosophila</taxon>
        <taxon>Sophophora</taxon>
    </lineage>
</organism>
<sequence length="578" mass="62648">MIRLNWLFRSSSVLLRSQVRLLHVGDANVLHSEVDKQSAEYKENAREMASLVGDLRNFTSQVLKGGGQKAIERHTSRGKLLARERINLLLDKGSPFLELSALAGHELYGEEVVNSGGIVTGVGRVCGTECLVVANDATVKGGSYYPITVKKHLRAQEIAQENRLPCIYLVDSGGANLPRQADVFPDKLHFGRIFYNQANMSAQGIPQIAVVMGSCTAGGAYVPAMADESIIVKKQGTIFLAGPPLVKAATGEEVSAEDLGGADLHCKTSGVTDHYALDDEHALYLARQIVSNLNLSATNSYNDQLMHSSQVNFQTATPPSAVEEPRYDAEELYGIVGPNLTKSFDVREVIARIVDGSRFTEFKKLYGETLVCGFAKLYGHTVGIVGNNGVLFSESALKGAHFIQLCAQRKIPLVFLQNITGFMVGRDAEANGIAKNGAKMVTAVACANVPKFTVIIGGSYGAGNYGMCGRAYSPRFLYMWPNSRISVMGGTQAANVMAQITEDQRKRAGKEFSEEEAQKLKAPIVEMFEAEGSPYYSTARLWDDGIIDPANTRQILGLSLKAALNNAGQETKFGVFRM</sequence>
<gene>
    <name evidence="9" type="primary">Mccc2</name>
    <name evidence="9" type="synonym">l(2)04524</name>
    <name evidence="9" type="ORF">CG3267</name>
</gene>
<dbReference type="EC" id="6.4.1.4"/>
<dbReference type="EMBL" id="AE013599">
    <property type="protein sequence ID" value="AAM70824.1"/>
    <property type="molecule type" value="Genomic_DNA"/>
</dbReference>
<dbReference type="EMBL" id="AF006654">
    <property type="protein sequence ID" value="AAB62570.1"/>
    <property type="molecule type" value="mRNA"/>
</dbReference>
<dbReference type="EMBL" id="AY084145">
    <property type="protein sequence ID" value="AAL89883.1"/>
    <property type="molecule type" value="mRNA"/>
</dbReference>
<dbReference type="RefSeq" id="NP_652724.1">
    <property type="nucleotide sequence ID" value="NM_144467.2"/>
</dbReference>
<dbReference type="SMR" id="Q9V9A7"/>
<dbReference type="BioGRID" id="72857">
    <property type="interactions" value="5"/>
</dbReference>
<dbReference type="FunCoup" id="Q9V9A7">
    <property type="interactions" value="1289"/>
</dbReference>
<dbReference type="IntAct" id="Q9V9A7">
    <property type="interactions" value="1"/>
</dbReference>
<dbReference type="STRING" id="7227.FBpp0085460"/>
<dbReference type="PaxDb" id="7227-FBpp0085460"/>
<dbReference type="DNASU" id="59261"/>
<dbReference type="EnsemblMetazoa" id="FBtr0086126">
    <property type="protein sequence ID" value="FBpp0085460"/>
    <property type="gene ID" value="FBgn0042083"/>
</dbReference>
<dbReference type="GeneID" id="59261"/>
<dbReference type="KEGG" id="dme:Dmel_CG3267"/>
<dbReference type="UCSC" id="CG3267-RA">
    <property type="organism name" value="d. melanogaster"/>
</dbReference>
<dbReference type="AGR" id="FB:FBgn0042083"/>
<dbReference type="CTD" id="64087"/>
<dbReference type="FlyBase" id="FBgn0042083">
    <property type="gene designation" value="Mccc2"/>
</dbReference>
<dbReference type="VEuPathDB" id="VectorBase:FBgn0042083"/>
<dbReference type="eggNOG" id="KOG0540">
    <property type="taxonomic scope" value="Eukaryota"/>
</dbReference>
<dbReference type="GeneTree" id="ENSGT00940000155949"/>
<dbReference type="HOGENOM" id="CLU_018822_0_1_1"/>
<dbReference type="InParanoid" id="Q9V9A7"/>
<dbReference type="OMA" id="GATTHCE"/>
<dbReference type="OrthoDB" id="439921at2759"/>
<dbReference type="PhylomeDB" id="Q9V9A7"/>
<dbReference type="Reactome" id="R-DME-196780">
    <property type="pathway name" value="Biotin transport and metabolism"/>
</dbReference>
<dbReference type="Reactome" id="R-DME-70895">
    <property type="pathway name" value="Branched-chain amino acid catabolism"/>
</dbReference>
<dbReference type="UniPathway" id="UPA00363">
    <property type="reaction ID" value="UER00861"/>
</dbReference>
<dbReference type="BioGRID-ORCS" id="59261">
    <property type="hits" value="0 hits in 3 CRISPR screens"/>
</dbReference>
<dbReference type="ChiTaRS" id="CG3267">
    <property type="organism name" value="fly"/>
</dbReference>
<dbReference type="GenomeRNAi" id="59261"/>
<dbReference type="PRO" id="PR:Q9V9A7"/>
<dbReference type="Proteomes" id="UP000000803">
    <property type="component" value="Chromosome 2R"/>
</dbReference>
<dbReference type="Bgee" id="FBgn0042083">
    <property type="expression patterns" value="Expressed in adult enteroendocrine precursor cell in adult midgut (Drosophila) and 52 other cell types or tissues"/>
</dbReference>
<dbReference type="ExpressionAtlas" id="Q9V9A7">
    <property type="expression patterns" value="baseline and differential"/>
</dbReference>
<dbReference type="GO" id="GO:1905202">
    <property type="term" value="C:methylcrotonoyl-CoA carboxylase complex"/>
    <property type="evidence" value="ECO:0000250"/>
    <property type="project" value="FlyBase"/>
</dbReference>
<dbReference type="GO" id="GO:0005759">
    <property type="term" value="C:mitochondrial matrix"/>
    <property type="evidence" value="ECO:0000250"/>
    <property type="project" value="FlyBase"/>
</dbReference>
<dbReference type="GO" id="GO:0005739">
    <property type="term" value="C:mitochondrion"/>
    <property type="evidence" value="ECO:0000318"/>
    <property type="project" value="GO_Central"/>
</dbReference>
<dbReference type="GO" id="GO:0005524">
    <property type="term" value="F:ATP binding"/>
    <property type="evidence" value="ECO:0007669"/>
    <property type="project" value="UniProtKB-KW"/>
</dbReference>
<dbReference type="GO" id="GO:0004485">
    <property type="term" value="F:methylcrotonoyl-CoA carboxylase activity"/>
    <property type="evidence" value="ECO:0007669"/>
    <property type="project" value="UniProtKB-EC"/>
</dbReference>
<dbReference type="GO" id="GO:0015936">
    <property type="term" value="P:coenzyme A metabolic process"/>
    <property type="evidence" value="ECO:0000250"/>
    <property type="project" value="FlyBase"/>
</dbReference>
<dbReference type="GO" id="GO:0006552">
    <property type="term" value="P:L-leucine catabolic process"/>
    <property type="evidence" value="ECO:0000318"/>
    <property type="project" value="GO_Central"/>
</dbReference>
<dbReference type="GO" id="GO:0007563">
    <property type="term" value="P:regulation of eclosion"/>
    <property type="evidence" value="ECO:0000315"/>
    <property type="project" value="UniProtKB"/>
</dbReference>
<dbReference type="FunFam" id="3.90.226.10:FF:000004">
    <property type="entry name" value="Methylcrotonoyl-CoA carboxylase beta chain"/>
    <property type="match status" value="1"/>
</dbReference>
<dbReference type="FunFam" id="3.90.226.10:FF:000007">
    <property type="entry name" value="Methylcrotonoyl-CoA carboxylase subunit beta"/>
    <property type="match status" value="1"/>
</dbReference>
<dbReference type="Gene3D" id="3.90.226.10">
    <property type="entry name" value="2-enoyl-CoA Hydratase, Chain A, domain 1"/>
    <property type="match status" value="2"/>
</dbReference>
<dbReference type="InterPro" id="IPR034733">
    <property type="entry name" value="AcCoA_carboxyl_beta"/>
</dbReference>
<dbReference type="InterPro" id="IPR029045">
    <property type="entry name" value="ClpP/crotonase-like_dom_sf"/>
</dbReference>
<dbReference type="InterPro" id="IPR011763">
    <property type="entry name" value="COA_CT_C"/>
</dbReference>
<dbReference type="InterPro" id="IPR011762">
    <property type="entry name" value="COA_CT_N"/>
</dbReference>
<dbReference type="InterPro" id="IPR045190">
    <property type="entry name" value="MCCB/AccD1-like"/>
</dbReference>
<dbReference type="PANTHER" id="PTHR22855">
    <property type="entry name" value="ACETYL, PROPIONYL, PYRUVATE, AND GLUTACONYL CARBOXYLASE-RELATED"/>
    <property type="match status" value="1"/>
</dbReference>
<dbReference type="PANTHER" id="PTHR22855:SF13">
    <property type="entry name" value="METHYLCROTONOYL-COA CARBOXYLASE BETA CHAIN, MITOCHONDRIAL"/>
    <property type="match status" value="1"/>
</dbReference>
<dbReference type="Pfam" id="PF01039">
    <property type="entry name" value="Carboxyl_trans"/>
    <property type="match status" value="1"/>
</dbReference>
<dbReference type="SUPFAM" id="SSF52096">
    <property type="entry name" value="ClpP/crotonase"/>
    <property type="match status" value="2"/>
</dbReference>
<dbReference type="PROSITE" id="PS50989">
    <property type="entry name" value="COA_CT_CTER"/>
    <property type="match status" value="1"/>
</dbReference>
<dbReference type="PROSITE" id="PS50980">
    <property type="entry name" value="COA_CT_NTER"/>
    <property type="match status" value="1"/>
</dbReference>
<protein>
    <recommendedName>
        <fullName>Probable methylcrotonoyl-CoA carboxylase beta chain, mitochondrial</fullName>
        <shortName>MCCase subunit beta</shortName>
        <ecNumber>6.4.1.4</ecNumber>
    </recommendedName>
    <alternativeName>
        <fullName>3-methylcrotonyl-CoA carboxylase 2</fullName>
    </alternativeName>
    <alternativeName>
        <fullName>3-methylcrotonyl-CoA carboxylase non-biotin-containing subunit</fullName>
    </alternativeName>
    <alternativeName>
        <fullName>3-methylcrotonyl-CoA:carbon dioxide ligase subunit beta</fullName>
    </alternativeName>
</protein>
<evidence type="ECO:0000250" key="1"/>
<evidence type="ECO:0000255" key="2"/>
<evidence type="ECO:0000255" key="3">
    <source>
        <dbReference type="PROSITE-ProRule" id="PRU01136"/>
    </source>
</evidence>
<evidence type="ECO:0000255" key="4">
    <source>
        <dbReference type="PROSITE-ProRule" id="PRU01137"/>
    </source>
</evidence>
<evidence type="ECO:0000255" key="5">
    <source>
        <dbReference type="PROSITE-ProRule" id="PRU01138"/>
    </source>
</evidence>
<evidence type="ECO:0000269" key="6">
    <source>
    </source>
</evidence>
<evidence type="ECO:0000305" key="7"/>
<evidence type="ECO:0000312" key="8">
    <source>
        <dbReference type="EMBL" id="AAM70824.1"/>
    </source>
</evidence>
<evidence type="ECO:0000312" key="9">
    <source>
        <dbReference type="FlyBase" id="FBgn0042083"/>
    </source>
</evidence>
<reference evidence="7" key="1">
    <citation type="journal article" date="2000" name="Science">
        <title>The genome sequence of Drosophila melanogaster.</title>
        <authorList>
            <person name="Adams M.D."/>
            <person name="Celniker S.E."/>
            <person name="Holt R.A."/>
            <person name="Evans C.A."/>
            <person name="Gocayne J.D."/>
            <person name="Amanatides P.G."/>
            <person name="Scherer S.E."/>
            <person name="Li P.W."/>
            <person name="Hoskins R.A."/>
            <person name="Galle R.F."/>
            <person name="George R.A."/>
            <person name="Lewis S.E."/>
            <person name="Richards S."/>
            <person name="Ashburner M."/>
            <person name="Henderson S.N."/>
            <person name="Sutton G.G."/>
            <person name="Wortman J.R."/>
            <person name="Yandell M.D."/>
            <person name="Zhang Q."/>
            <person name="Chen L.X."/>
            <person name="Brandon R.C."/>
            <person name="Rogers Y.-H.C."/>
            <person name="Blazej R.G."/>
            <person name="Champe M."/>
            <person name="Pfeiffer B.D."/>
            <person name="Wan K.H."/>
            <person name="Doyle C."/>
            <person name="Baxter E.G."/>
            <person name="Helt G."/>
            <person name="Nelson C.R."/>
            <person name="Miklos G.L.G."/>
            <person name="Abril J.F."/>
            <person name="Agbayani A."/>
            <person name="An H.-J."/>
            <person name="Andrews-Pfannkoch C."/>
            <person name="Baldwin D."/>
            <person name="Ballew R.M."/>
            <person name="Basu A."/>
            <person name="Baxendale J."/>
            <person name="Bayraktaroglu L."/>
            <person name="Beasley E.M."/>
            <person name="Beeson K.Y."/>
            <person name="Benos P.V."/>
            <person name="Berman B.P."/>
            <person name="Bhandari D."/>
            <person name="Bolshakov S."/>
            <person name="Borkova D."/>
            <person name="Botchan M.R."/>
            <person name="Bouck J."/>
            <person name="Brokstein P."/>
            <person name="Brottier P."/>
            <person name="Burtis K.C."/>
            <person name="Busam D.A."/>
            <person name="Butler H."/>
            <person name="Cadieu E."/>
            <person name="Center A."/>
            <person name="Chandra I."/>
            <person name="Cherry J.M."/>
            <person name="Cawley S."/>
            <person name="Dahlke C."/>
            <person name="Davenport L.B."/>
            <person name="Davies P."/>
            <person name="de Pablos B."/>
            <person name="Delcher A."/>
            <person name="Deng Z."/>
            <person name="Mays A.D."/>
            <person name="Dew I."/>
            <person name="Dietz S.M."/>
            <person name="Dodson K."/>
            <person name="Doup L.E."/>
            <person name="Downes M."/>
            <person name="Dugan-Rocha S."/>
            <person name="Dunkov B.C."/>
            <person name="Dunn P."/>
            <person name="Durbin K.J."/>
            <person name="Evangelista C.C."/>
            <person name="Ferraz C."/>
            <person name="Ferriera S."/>
            <person name="Fleischmann W."/>
            <person name="Fosler C."/>
            <person name="Gabrielian A.E."/>
            <person name="Garg N.S."/>
            <person name="Gelbart W.M."/>
            <person name="Glasser K."/>
            <person name="Glodek A."/>
            <person name="Gong F."/>
            <person name="Gorrell J.H."/>
            <person name="Gu Z."/>
            <person name="Guan P."/>
            <person name="Harris M."/>
            <person name="Harris N.L."/>
            <person name="Harvey D.A."/>
            <person name="Heiman T.J."/>
            <person name="Hernandez J.R."/>
            <person name="Houck J."/>
            <person name="Hostin D."/>
            <person name="Houston K.A."/>
            <person name="Howland T.J."/>
            <person name="Wei M.-H."/>
            <person name="Ibegwam C."/>
            <person name="Jalali M."/>
            <person name="Kalush F."/>
            <person name="Karpen G.H."/>
            <person name="Ke Z."/>
            <person name="Kennison J.A."/>
            <person name="Ketchum K.A."/>
            <person name="Kimmel B.E."/>
            <person name="Kodira C.D."/>
            <person name="Kraft C.L."/>
            <person name="Kravitz S."/>
            <person name="Kulp D."/>
            <person name="Lai Z."/>
            <person name="Lasko P."/>
            <person name="Lei Y."/>
            <person name="Levitsky A.A."/>
            <person name="Li J.H."/>
            <person name="Li Z."/>
            <person name="Liang Y."/>
            <person name="Lin X."/>
            <person name="Liu X."/>
            <person name="Mattei B."/>
            <person name="McIntosh T.C."/>
            <person name="McLeod M.P."/>
            <person name="McPherson D."/>
            <person name="Merkulov G."/>
            <person name="Milshina N.V."/>
            <person name="Mobarry C."/>
            <person name="Morris J."/>
            <person name="Moshrefi A."/>
            <person name="Mount S.M."/>
            <person name="Moy M."/>
            <person name="Murphy B."/>
            <person name="Murphy L."/>
            <person name="Muzny D.M."/>
            <person name="Nelson D.L."/>
            <person name="Nelson D.R."/>
            <person name="Nelson K.A."/>
            <person name="Nixon K."/>
            <person name="Nusskern D.R."/>
            <person name="Pacleb J.M."/>
            <person name="Palazzolo M."/>
            <person name="Pittman G.S."/>
            <person name="Pan S."/>
            <person name="Pollard J."/>
            <person name="Puri V."/>
            <person name="Reese M.G."/>
            <person name="Reinert K."/>
            <person name="Remington K."/>
            <person name="Saunders R.D.C."/>
            <person name="Scheeler F."/>
            <person name="Shen H."/>
            <person name="Shue B.C."/>
            <person name="Siden-Kiamos I."/>
            <person name="Simpson M."/>
            <person name="Skupski M.P."/>
            <person name="Smith T.J."/>
            <person name="Spier E."/>
            <person name="Spradling A.C."/>
            <person name="Stapleton M."/>
            <person name="Strong R."/>
            <person name="Sun E."/>
            <person name="Svirskas R."/>
            <person name="Tector C."/>
            <person name="Turner R."/>
            <person name="Venter E."/>
            <person name="Wang A.H."/>
            <person name="Wang X."/>
            <person name="Wang Z.-Y."/>
            <person name="Wassarman D.A."/>
            <person name="Weinstock G.M."/>
            <person name="Weissenbach J."/>
            <person name="Williams S.M."/>
            <person name="Woodage T."/>
            <person name="Worley K.C."/>
            <person name="Wu D."/>
            <person name="Yang S."/>
            <person name="Yao Q.A."/>
            <person name="Ye J."/>
            <person name="Yeh R.-F."/>
            <person name="Zaveri J.S."/>
            <person name="Zhan M."/>
            <person name="Zhang G."/>
            <person name="Zhao Q."/>
            <person name="Zheng L."/>
            <person name="Zheng X.H."/>
            <person name="Zhong F.N."/>
            <person name="Zhong W."/>
            <person name="Zhou X."/>
            <person name="Zhu S.C."/>
            <person name="Zhu X."/>
            <person name="Smith H.O."/>
            <person name="Gibbs R.A."/>
            <person name="Myers E.W."/>
            <person name="Rubin G.M."/>
            <person name="Venter J.C."/>
        </authorList>
    </citation>
    <scope>NUCLEOTIDE SEQUENCE [LARGE SCALE GENOMIC DNA]</scope>
    <source>
        <strain>Berkeley</strain>
    </source>
</reference>
<reference key="2">
    <citation type="journal article" date="2002" name="Genome Biol.">
        <title>Annotation of the Drosophila melanogaster euchromatic genome: a systematic review.</title>
        <authorList>
            <person name="Misra S."/>
            <person name="Crosby M.A."/>
            <person name="Mungall C.J."/>
            <person name="Matthews B.B."/>
            <person name="Campbell K.S."/>
            <person name="Hradecky P."/>
            <person name="Huang Y."/>
            <person name="Kaminker J.S."/>
            <person name="Millburn G.H."/>
            <person name="Prochnik S.E."/>
            <person name="Smith C.D."/>
            <person name="Tupy J.L."/>
            <person name="Whitfield E.J."/>
            <person name="Bayraktaroglu L."/>
            <person name="Berman B.P."/>
            <person name="Bettencourt B.R."/>
            <person name="Celniker S.E."/>
            <person name="de Grey A.D.N.J."/>
            <person name="Drysdale R.A."/>
            <person name="Harris N.L."/>
            <person name="Richter J."/>
            <person name="Russo S."/>
            <person name="Schroeder A.J."/>
            <person name="Shu S.Q."/>
            <person name="Stapleton M."/>
            <person name="Yamada C."/>
            <person name="Ashburner M."/>
            <person name="Gelbart W.M."/>
            <person name="Rubin G.M."/>
            <person name="Lewis S.E."/>
        </authorList>
    </citation>
    <scope>GENOME REANNOTATION</scope>
    <source>
        <strain>Berkeley</strain>
    </source>
</reference>
<reference key="3">
    <citation type="journal article" date="2002" name="Genome Biol.">
        <title>A Drosophila full-length cDNA resource.</title>
        <authorList>
            <person name="Stapleton M."/>
            <person name="Carlson J.W."/>
            <person name="Brokstein P."/>
            <person name="Yu C."/>
            <person name="Champe M."/>
            <person name="George R.A."/>
            <person name="Guarin H."/>
            <person name="Kronmiller B."/>
            <person name="Pacleb J.M."/>
            <person name="Park S."/>
            <person name="Wan K.H."/>
            <person name="Rubin G.M."/>
            <person name="Celniker S.E."/>
        </authorList>
    </citation>
    <scope>NUCLEOTIDE SEQUENCE [LARGE SCALE MRNA]</scope>
    <source>
        <strain>Berkeley</strain>
        <tissue>Embryo</tissue>
    </source>
</reference>
<reference evidence="7" key="4">
    <citation type="journal article" date="1998" name="Genetics">
        <title>Genes expressed in the ring gland, the major endocrine organ of Drosophila melanogaster.</title>
        <authorList>
            <person name="Harvie P.D."/>
            <person name="Filippova M."/>
            <person name="Bryant P.J."/>
        </authorList>
    </citation>
    <scope>NUCLEOTIDE SEQUENCE [MRNA] OF 43-126 AND 271-578</scope>
    <scope>TISSUE SPECIFICITY</scope>
    <source>
        <tissue>Larval CNS</tissue>
        <tissue>Larval ring gland</tissue>
    </source>
</reference>
<feature type="transit peptide" description="Mitochondrion" evidence="2">
    <location>
        <begin position="1"/>
        <end position="29"/>
    </location>
</feature>
<feature type="chain" id="PRO_0000000297" description="Probable methylcrotonoyl-CoA carboxylase beta chain, mitochondrial">
    <location>
        <begin position="30"/>
        <end position="578"/>
    </location>
</feature>
<feature type="domain" description="CoA carboxyltransferase N-terminal" evidence="3">
    <location>
        <begin position="48"/>
        <end position="305"/>
    </location>
</feature>
<feature type="domain" description="CoA carboxyltransferase C-terminal" evidence="4">
    <location>
        <begin position="321"/>
        <end position="570"/>
    </location>
</feature>
<feature type="region of interest" description="Carboxyltransferase" evidence="5">
    <location>
        <begin position="48"/>
        <end position="570"/>
    </location>
</feature>
<feature type="region of interest" description="Acyl-CoA binding" evidence="2">
    <location>
        <begin position="355"/>
        <end position="388"/>
    </location>
</feature>
<feature type="sequence conflict" description="In Ref. 4; no nucleotide entry." evidence="7" ref="4">
    <original>S</original>
    <variation>R</variation>
    <location>
        <position position="50"/>
    </location>
</feature>
<feature type="sequence conflict" description="In Ref. 4; no nucleotide entry." evidence="7" ref="4">
    <original>F</original>
    <variation>G</variation>
    <location>
        <position position="96"/>
    </location>
</feature>
<feature type="sequence conflict" description="In Ref. 3; AAL89883." evidence="7" ref="3">
    <original>H</original>
    <variation>N</variation>
    <location>
        <position position="274"/>
    </location>
</feature>
<feature type="sequence conflict" description="In Ref. 4; no nucleotide entry." evidence="7" ref="4">
    <original>L</original>
    <variation>V</variation>
    <location>
        <position position="277"/>
    </location>
</feature>
<feature type="sequence conflict" description="In Ref. 4; no nucleotide entry." evidence="7" ref="4">
    <original>E</original>
    <variation>R</variation>
    <location>
        <position position="330"/>
    </location>
</feature>
<feature type="sequence conflict" description="In Ref. 4; no nucleotide entry." evidence="7" ref="4">
    <original>KL</original>
    <variation>NV</variation>
    <location>
        <begin position="376"/>
        <end position="377"/>
    </location>
</feature>
<feature type="sequence conflict" description="In Ref. 4; no nucleotide entry." evidence="7" ref="4">
    <location>
        <position position="422"/>
    </location>
</feature>